<gene>
    <name evidence="1" type="primary">mnmA</name>
    <name type="ordered locus">LBUL_0688</name>
</gene>
<proteinExistence type="inferred from homology"/>
<reference key="1">
    <citation type="journal article" date="2006" name="Proc. Natl. Acad. Sci. U.S.A.">
        <title>Comparative genomics of the lactic acid bacteria.</title>
        <authorList>
            <person name="Makarova K.S."/>
            <person name="Slesarev A."/>
            <person name="Wolf Y.I."/>
            <person name="Sorokin A."/>
            <person name="Mirkin B."/>
            <person name="Koonin E.V."/>
            <person name="Pavlov A."/>
            <person name="Pavlova N."/>
            <person name="Karamychev V."/>
            <person name="Polouchine N."/>
            <person name="Shakhova V."/>
            <person name="Grigoriev I."/>
            <person name="Lou Y."/>
            <person name="Rohksar D."/>
            <person name="Lucas S."/>
            <person name="Huang K."/>
            <person name="Goodstein D.M."/>
            <person name="Hawkins T."/>
            <person name="Plengvidhya V."/>
            <person name="Welker D."/>
            <person name="Hughes J."/>
            <person name="Goh Y."/>
            <person name="Benson A."/>
            <person name="Baldwin K."/>
            <person name="Lee J.-H."/>
            <person name="Diaz-Muniz I."/>
            <person name="Dosti B."/>
            <person name="Smeianov V."/>
            <person name="Wechter W."/>
            <person name="Barabote R."/>
            <person name="Lorca G."/>
            <person name="Altermann E."/>
            <person name="Barrangou R."/>
            <person name="Ganesan B."/>
            <person name="Xie Y."/>
            <person name="Rawsthorne H."/>
            <person name="Tamir D."/>
            <person name="Parker C."/>
            <person name="Breidt F."/>
            <person name="Broadbent J.R."/>
            <person name="Hutkins R."/>
            <person name="O'Sullivan D."/>
            <person name="Steele J."/>
            <person name="Unlu G."/>
            <person name="Saier M.H. Jr."/>
            <person name="Klaenhammer T."/>
            <person name="Richardson P."/>
            <person name="Kozyavkin S."/>
            <person name="Weimer B.C."/>
            <person name="Mills D.A."/>
        </authorList>
    </citation>
    <scope>NUCLEOTIDE SEQUENCE [LARGE SCALE GENOMIC DNA]</scope>
    <source>
        <strain>ATCC BAA-365 / Lb-18</strain>
    </source>
</reference>
<accession>Q04B58</accession>
<comment type="function">
    <text evidence="1">Catalyzes the 2-thiolation of uridine at the wobble position (U34) of tRNA, leading to the formation of s(2)U34.</text>
</comment>
<comment type="catalytic activity">
    <reaction evidence="1">
        <text>S-sulfanyl-L-cysteinyl-[protein] + uridine(34) in tRNA + AH2 + ATP = 2-thiouridine(34) in tRNA + L-cysteinyl-[protein] + A + AMP + diphosphate + H(+)</text>
        <dbReference type="Rhea" id="RHEA:47032"/>
        <dbReference type="Rhea" id="RHEA-COMP:10131"/>
        <dbReference type="Rhea" id="RHEA-COMP:11726"/>
        <dbReference type="Rhea" id="RHEA-COMP:11727"/>
        <dbReference type="Rhea" id="RHEA-COMP:11728"/>
        <dbReference type="ChEBI" id="CHEBI:13193"/>
        <dbReference type="ChEBI" id="CHEBI:15378"/>
        <dbReference type="ChEBI" id="CHEBI:17499"/>
        <dbReference type="ChEBI" id="CHEBI:29950"/>
        <dbReference type="ChEBI" id="CHEBI:30616"/>
        <dbReference type="ChEBI" id="CHEBI:33019"/>
        <dbReference type="ChEBI" id="CHEBI:61963"/>
        <dbReference type="ChEBI" id="CHEBI:65315"/>
        <dbReference type="ChEBI" id="CHEBI:87170"/>
        <dbReference type="ChEBI" id="CHEBI:456215"/>
        <dbReference type="EC" id="2.8.1.13"/>
    </reaction>
</comment>
<comment type="subcellular location">
    <subcellularLocation>
        <location evidence="1">Cytoplasm</location>
    </subcellularLocation>
</comment>
<comment type="similarity">
    <text evidence="1">Belongs to the MnmA/TRMU family.</text>
</comment>
<evidence type="ECO:0000255" key="1">
    <source>
        <dbReference type="HAMAP-Rule" id="MF_00144"/>
    </source>
</evidence>
<dbReference type="EC" id="2.8.1.13" evidence="1"/>
<dbReference type="EMBL" id="CP000412">
    <property type="protein sequence ID" value="ABJ58314.1"/>
    <property type="molecule type" value="Genomic_DNA"/>
</dbReference>
<dbReference type="RefSeq" id="WP_003619195.1">
    <property type="nucleotide sequence ID" value="NC_008529.1"/>
</dbReference>
<dbReference type="SMR" id="Q04B58"/>
<dbReference type="KEGG" id="lbu:LBUL_0688"/>
<dbReference type="HOGENOM" id="CLU_035188_1_0_9"/>
<dbReference type="BioCyc" id="LDEL321956:LBUL_RS03285-MONOMER"/>
<dbReference type="GO" id="GO:0005737">
    <property type="term" value="C:cytoplasm"/>
    <property type="evidence" value="ECO:0007669"/>
    <property type="project" value="UniProtKB-SubCell"/>
</dbReference>
<dbReference type="GO" id="GO:0005524">
    <property type="term" value="F:ATP binding"/>
    <property type="evidence" value="ECO:0007669"/>
    <property type="project" value="UniProtKB-KW"/>
</dbReference>
<dbReference type="GO" id="GO:0000049">
    <property type="term" value="F:tRNA binding"/>
    <property type="evidence" value="ECO:0007669"/>
    <property type="project" value="UniProtKB-KW"/>
</dbReference>
<dbReference type="GO" id="GO:0103016">
    <property type="term" value="F:tRNA-uridine 2-sulfurtransferase activity"/>
    <property type="evidence" value="ECO:0007669"/>
    <property type="project" value="UniProtKB-EC"/>
</dbReference>
<dbReference type="GO" id="GO:0002143">
    <property type="term" value="P:tRNA wobble position uridine thiolation"/>
    <property type="evidence" value="ECO:0007669"/>
    <property type="project" value="TreeGrafter"/>
</dbReference>
<dbReference type="CDD" id="cd01998">
    <property type="entry name" value="MnmA_TRMU-like"/>
    <property type="match status" value="1"/>
</dbReference>
<dbReference type="FunFam" id="2.30.30.280:FF:000001">
    <property type="entry name" value="tRNA-specific 2-thiouridylase MnmA"/>
    <property type="match status" value="1"/>
</dbReference>
<dbReference type="FunFam" id="2.40.30.10:FF:000023">
    <property type="entry name" value="tRNA-specific 2-thiouridylase MnmA"/>
    <property type="match status" value="1"/>
</dbReference>
<dbReference type="FunFam" id="3.40.50.620:FF:000004">
    <property type="entry name" value="tRNA-specific 2-thiouridylase MnmA"/>
    <property type="match status" value="1"/>
</dbReference>
<dbReference type="Gene3D" id="2.30.30.280">
    <property type="entry name" value="Adenine nucleotide alpha hydrolases-like domains"/>
    <property type="match status" value="1"/>
</dbReference>
<dbReference type="Gene3D" id="3.40.50.620">
    <property type="entry name" value="HUPs"/>
    <property type="match status" value="1"/>
</dbReference>
<dbReference type="Gene3D" id="2.40.30.10">
    <property type="entry name" value="Translation factors"/>
    <property type="match status" value="1"/>
</dbReference>
<dbReference type="HAMAP" id="MF_00144">
    <property type="entry name" value="tRNA_thiouridyl_MnmA"/>
    <property type="match status" value="1"/>
</dbReference>
<dbReference type="InterPro" id="IPR004506">
    <property type="entry name" value="MnmA-like"/>
</dbReference>
<dbReference type="InterPro" id="IPR046885">
    <property type="entry name" value="MnmA-like_C"/>
</dbReference>
<dbReference type="InterPro" id="IPR046884">
    <property type="entry name" value="MnmA-like_central"/>
</dbReference>
<dbReference type="InterPro" id="IPR023382">
    <property type="entry name" value="MnmA-like_central_sf"/>
</dbReference>
<dbReference type="InterPro" id="IPR014729">
    <property type="entry name" value="Rossmann-like_a/b/a_fold"/>
</dbReference>
<dbReference type="NCBIfam" id="NF001138">
    <property type="entry name" value="PRK00143.1"/>
    <property type="match status" value="1"/>
</dbReference>
<dbReference type="NCBIfam" id="TIGR00420">
    <property type="entry name" value="trmU"/>
    <property type="match status" value="1"/>
</dbReference>
<dbReference type="PANTHER" id="PTHR11933:SF5">
    <property type="entry name" value="MITOCHONDRIAL TRNA-SPECIFIC 2-THIOURIDYLASE 1"/>
    <property type="match status" value="1"/>
</dbReference>
<dbReference type="PANTHER" id="PTHR11933">
    <property type="entry name" value="TRNA 5-METHYLAMINOMETHYL-2-THIOURIDYLATE -METHYLTRANSFERASE"/>
    <property type="match status" value="1"/>
</dbReference>
<dbReference type="Pfam" id="PF03054">
    <property type="entry name" value="tRNA_Me_trans"/>
    <property type="match status" value="1"/>
</dbReference>
<dbReference type="Pfam" id="PF20258">
    <property type="entry name" value="tRNA_Me_trans_C"/>
    <property type="match status" value="1"/>
</dbReference>
<dbReference type="Pfam" id="PF20259">
    <property type="entry name" value="tRNA_Me_trans_M"/>
    <property type="match status" value="1"/>
</dbReference>
<dbReference type="SUPFAM" id="SSF52402">
    <property type="entry name" value="Adenine nucleotide alpha hydrolases-like"/>
    <property type="match status" value="1"/>
</dbReference>
<protein>
    <recommendedName>
        <fullName evidence="1">tRNA-specific 2-thiouridylase MnmA</fullName>
        <ecNumber evidence="1">2.8.1.13</ecNumber>
    </recommendedName>
</protein>
<keyword id="KW-0067">ATP-binding</keyword>
<keyword id="KW-0963">Cytoplasm</keyword>
<keyword id="KW-1015">Disulfide bond</keyword>
<keyword id="KW-0547">Nucleotide-binding</keyword>
<keyword id="KW-0694">RNA-binding</keyword>
<keyword id="KW-0808">Transferase</keyword>
<keyword id="KW-0819">tRNA processing</keyword>
<keyword id="KW-0820">tRNA-binding</keyword>
<feature type="chain" id="PRO_0000349672" description="tRNA-specific 2-thiouridylase MnmA">
    <location>
        <begin position="1"/>
        <end position="375"/>
    </location>
</feature>
<feature type="region of interest" description="Interaction with target base in tRNA" evidence="1">
    <location>
        <begin position="98"/>
        <end position="100"/>
    </location>
</feature>
<feature type="region of interest" description="Interaction with tRNA" evidence="1">
    <location>
        <begin position="150"/>
        <end position="152"/>
    </location>
</feature>
<feature type="region of interest" description="Interaction with tRNA" evidence="1">
    <location>
        <begin position="312"/>
        <end position="313"/>
    </location>
</feature>
<feature type="active site" description="Nucleophile" evidence="1">
    <location>
        <position position="103"/>
    </location>
</feature>
<feature type="active site" description="Cysteine persulfide intermediate" evidence="1">
    <location>
        <position position="200"/>
    </location>
</feature>
<feature type="binding site" evidence="1">
    <location>
        <begin position="12"/>
        <end position="19"/>
    </location>
    <ligand>
        <name>ATP</name>
        <dbReference type="ChEBI" id="CHEBI:30616"/>
    </ligand>
</feature>
<feature type="binding site" evidence="1">
    <location>
        <position position="38"/>
    </location>
    <ligand>
        <name>ATP</name>
        <dbReference type="ChEBI" id="CHEBI:30616"/>
    </ligand>
</feature>
<feature type="binding site" evidence="1">
    <location>
        <position position="127"/>
    </location>
    <ligand>
        <name>ATP</name>
        <dbReference type="ChEBI" id="CHEBI:30616"/>
    </ligand>
</feature>
<feature type="site" description="Interaction with tRNA" evidence="1">
    <location>
        <position position="128"/>
    </location>
</feature>
<feature type="site" description="Interaction with tRNA" evidence="1">
    <location>
        <position position="346"/>
    </location>
</feature>
<feature type="disulfide bond" description="Alternate" evidence="1">
    <location>
        <begin position="103"/>
        <end position="200"/>
    </location>
</feature>
<organism>
    <name type="scientific">Lactobacillus delbrueckii subsp. bulgaricus (strain ATCC BAA-365 / Lb-18)</name>
    <dbReference type="NCBI Taxonomy" id="321956"/>
    <lineage>
        <taxon>Bacteria</taxon>
        <taxon>Bacillati</taxon>
        <taxon>Bacillota</taxon>
        <taxon>Bacilli</taxon>
        <taxon>Lactobacillales</taxon>
        <taxon>Lactobacillaceae</taxon>
        <taxon>Lactobacillus</taxon>
    </lineage>
</organism>
<name>MNMA_LACDB</name>
<sequence length="375" mass="42124">MVDNSKIRVVVGMSGGVDSSVSALLLKQQGYDVVGVFMKNWDDTNDDGVCTATEDYEDVKKVADKIGIPYYSINFEKEYWERVFQYFLKEYKAGRTPNPDIMCNTEVKFKSFLEYALDLDADYLAMGHYAKTMVDENGVTHMMRPKDGNKDQTYFLSQLTQEQIKRVMFPLQDLTKPEVRRIAEEAGLVNAKKKDSTGICFIGERNFKHFLSEFLPAQGGDMVTPDGKVVGHHAGLMYYTIGQRQGLGLGSTKESTAPWFVVGKDLEKNQLIVEQGYDSPRLYADRLQASGMTFFTGNPEEDTEFKATAKFRYRQCDVGVTVKYYAASKTADVYFDEPARAVTPGQALVLYNGEECLGGGNIDAAFKDDKKLQLV</sequence>